<protein>
    <recommendedName>
        <fullName evidence="7">4-hydroxyproline 2-epimerase</fullName>
        <shortName>4Hyp 2-epimerase</shortName>
        <shortName evidence="7">4HypE</shortName>
        <ecNumber evidence="3 4 5">5.1.1.8</ecNumber>
    </recommendedName>
    <alternativeName>
        <fullName evidence="6">Hydroxyproline-2-epimerase</fullName>
        <shortName evidence="6">PaHyPRE</shortName>
    </alternativeName>
</protein>
<proteinExistence type="evidence at protein level"/>
<comment type="function">
    <text evidence="3 4 5">Allows intracellular utilization of 4-hydroxyproline, one of the major constituents of host collagen, by converting trans-4-hydroxy-L-proline (t4LHyp) to cis-4-hydroxy-D-proline (c4DHyp), which can be further metabolized by intracellular 4-hydroxy-D-proline oxidases. Strong B-cell mitogen. Plays an important role in the regulation of intra- and extracellular amino acid pools, allowing the bacterium to profit from host precursors and enzymatic pathways. Cannot use L-proline, trans-3-hydroxy-L-proline (t3LHyp) and pyrrolidone-5-carboxylate (P5C) as substrate.</text>
</comment>
<comment type="catalytic activity">
    <reaction evidence="3 4 5">
        <text>trans-4-hydroxy-L-proline = cis-4-hydroxy-D-proline</text>
        <dbReference type="Rhea" id="RHEA:21152"/>
        <dbReference type="ChEBI" id="CHEBI:57690"/>
        <dbReference type="ChEBI" id="CHEBI:58375"/>
        <dbReference type="EC" id="5.1.1.8"/>
    </reaction>
</comment>
<comment type="activity regulation">
    <text evidence="3 4">Inhibited by iodoacetate, iodoacetamide and by high amounts (10 mM) of pyrrole-2-carboxylate (PYC). Not inhibited by PYC at 1 mM.</text>
</comment>
<comment type="biophysicochemical properties">
    <kinetics>
        <KM evidence="3">15.9 mM for 4-hydroxy-L-proline</KM>
        <KM evidence="3">18.5 mM for 4-hydroxy-D-proline</KM>
        <KM evidence="4">2.4 mM for trans-4-hydroxy-L-proline</KM>
        <KM evidence="4">1.6 mM for cis-4-hydroxy-D-proline</KM>
        <Vmax evidence="3">1.65 uM/sec/mg enzyme with 4-hydroxy-L-proline as substrate (at 37 degrees Celsius)</Vmax>
        <Vmax evidence="3">2.4 uM/sec/mg enzyme with 4-hydroxy-D-proline as substrate (at 37 degrees Celsius)</Vmax>
    </kinetics>
</comment>
<comment type="subunit">
    <text evidence="1">Homodimer.</text>
</comment>
<comment type="induction">
    <text evidence="5">Is up-regulated when the bacterium is grown on t4LHyp or t3LHyp as sole carbon source.</text>
</comment>
<comment type="miscellaneous">
    <text>This enzyme does not require pyridoxal phosphate (PLP) as a cofactor.</text>
</comment>
<comment type="similarity">
    <text evidence="8">Belongs to the proline racemase family.</text>
</comment>
<reference key="1">
    <citation type="journal article" date="2007" name="PLoS ONE">
        <title>Molecular and structural discrimination of proline racemase and hydroxyproline-2-epimerase from nosocomial and bacterial pathogens.</title>
        <authorList>
            <person name="Goytia M."/>
            <person name="Chamond N."/>
            <person name="Cosson A."/>
            <person name="Coatnoan N."/>
            <person name="Hermant D."/>
            <person name="Berneman A."/>
            <person name="Minoprio P."/>
        </authorList>
    </citation>
    <scope>NUCLEOTIDE SEQUENCE [GENOMIC DNA]</scope>
    <scope>FUNCTION</scope>
    <scope>CATALYTIC ACTIVITY</scope>
    <scope>ACTIVITY REGULATION</scope>
    <scope>BIOPHYSICOCHEMICAL PROPERTIES</scope>
    <scope>ROLE IN VIRULENCE</scope>
    <scope>MUTAGENESIS OF VAL-60; CYS-88 AND CYS-236</scope>
    <source>
        <strain>PAK</strain>
    </source>
</reference>
<reference key="2">
    <citation type="journal article" date="2000" name="Nature">
        <title>Complete genome sequence of Pseudomonas aeruginosa PAO1, an opportunistic pathogen.</title>
        <authorList>
            <person name="Stover C.K."/>
            <person name="Pham X.-Q.T."/>
            <person name="Erwin A.L."/>
            <person name="Mizoguchi S.D."/>
            <person name="Warrener P."/>
            <person name="Hickey M.J."/>
            <person name="Brinkman F.S.L."/>
            <person name="Hufnagle W.O."/>
            <person name="Kowalik D.J."/>
            <person name="Lagrou M."/>
            <person name="Garber R.L."/>
            <person name="Goltry L."/>
            <person name="Tolentino E."/>
            <person name="Westbrock-Wadman S."/>
            <person name="Yuan Y."/>
            <person name="Brody L.L."/>
            <person name="Coulter S.N."/>
            <person name="Folger K.R."/>
            <person name="Kas A."/>
            <person name="Larbig K."/>
            <person name="Lim R.M."/>
            <person name="Smith K.A."/>
            <person name="Spencer D.H."/>
            <person name="Wong G.K.-S."/>
            <person name="Wu Z."/>
            <person name="Paulsen I.T."/>
            <person name="Reizer J."/>
            <person name="Saier M.H. Jr."/>
            <person name="Hancock R.E.W."/>
            <person name="Lory S."/>
            <person name="Olson M.V."/>
        </authorList>
    </citation>
    <scope>NUCLEOTIDE SEQUENCE [LARGE SCALE GENOMIC DNA]</scope>
    <source>
        <strain>ATCC 15692 / DSM 22644 / CIP 104116 / JCM 14847 / LMG 12228 / 1C / PRS 101 / PAO1</strain>
    </source>
</reference>
<reference key="3">
    <citation type="journal article" date="2010" name="Electrophoresis">
        <title>Determination of 4-hydroxyproline-2-epimerase activity by capillary electrophoresis: A stereoselective platform for inhibitor screening of amino acid isomerases.</title>
        <authorList>
            <person name="Gavina J.M."/>
            <person name="White C.E."/>
            <person name="Finan T.M."/>
            <person name="Britz-McKibbin P."/>
        </authorList>
    </citation>
    <scope>FUNCTION</scope>
    <scope>CATALYTIC ACTIVITY</scope>
    <scope>SUBSTRATE SPECIFICITY</scope>
    <scope>BIOPHYSICOCHEMICAL PROPERTIES</scope>
    <scope>ACTIVITY REGULATION</scope>
</reference>
<reference key="4">
    <citation type="journal article" date="2014" name="Elife">
        <title>Prediction and characterization of enzymatic activities guided by sequence similarity and genome neighborhood networks.</title>
        <authorList>
            <person name="Zhao S."/>
            <person name="Sakai A."/>
            <person name="Zhang X."/>
            <person name="Vetting M.W."/>
            <person name="Kumar R."/>
            <person name="Hillerich B."/>
            <person name="San Francisco B."/>
            <person name="Solbiati J."/>
            <person name="Steves A."/>
            <person name="Brown S."/>
            <person name="Akiva E."/>
            <person name="Barber A."/>
            <person name="Seidel R.D."/>
            <person name="Babbitt P.C."/>
            <person name="Almo S.C."/>
            <person name="Gerlt J.A."/>
            <person name="Jacobson M.P."/>
        </authorList>
    </citation>
    <scope>FUNCTION</scope>
    <scope>CATALYTIC ACTIVITY</scope>
    <scope>INDUCTION</scope>
</reference>
<reference key="5">
    <citation type="submission" date="2005-12" db="PDB data bank">
        <title>The crystal structure of PA1268 solved by sulfur SAD.</title>
        <authorList>
            <consortium name="Midwest center for structural genomics (MCSG)"/>
        </authorList>
    </citation>
    <scope>X-RAY CRYSTALLOGRAPHY (2.13 ANGSTROMS)</scope>
</reference>
<evidence type="ECO:0000250" key="1"/>
<evidence type="ECO:0000250" key="2">
    <source>
        <dbReference type="UniProtKB" id="Q4KGU2"/>
    </source>
</evidence>
<evidence type="ECO:0000269" key="3">
    <source>
    </source>
</evidence>
<evidence type="ECO:0000269" key="4">
    <source>
    </source>
</evidence>
<evidence type="ECO:0000269" key="5">
    <source>
    </source>
</evidence>
<evidence type="ECO:0000303" key="6">
    <source>
    </source>
</evidence>
<evidence type="ECO:0000303" key="7">
    <source>
    </source>
</evidence>
<evidence type="ECO:0000305" key="8"/>
<evidence type="ECO:0007829" key="9">
    <source>
        <dbReference type="PDB" id="2AZP"/>
    </source>
</evidence>
<keyword id="KW-0002">3D-structure</keyword>
<keyword id="KW-0413">Isomerase</keyword>
<keyword id="KW-1185">Reference proteome</keyword>
<organism>
    <name type="scientific">Pseudomonas aeruginosa (strain ATCC 15692 / DSM 22644 / CIP 104116 / JCM 14847 / LMG 12228 / 1C / PRS 101 / PAO1)</name>
    <dbReference type="NCBI Taxonomy" id="208964"/>
    <lineage>
        <taxon>Bacteria</taxon>
        <taxon>Pseudomonadati</taxon>
        <taxon>Pseudomonadota</taxon>
        <taxon>Gammaproteobacteria</taxon>
        <taxon>Pseudomonadales</taxon>
        <taxon>Pseudomonadaceae</taxon>
        <taxon>Pseudomonas</taxon>
    </lineage>
</organism>
<sequence length="314" mass="33528">MQRIRIIDSHTGGEPTRLVIGGFPDLGQGDMAERRRLLGERHDAWRAACILEPRGSDVLVGALLCAPVDPEACAGVIFFNNSGYLGMCGHGTIGLVASLAHLGRIGPGVHRIETPVGEVEATLHEDGSVSVRNVPAYRYRRQVSVEVPGIGRVSGDIAWGGNWFFLVAGHGQRLAGDNLDALTAYTVAVQQALDDQDIRGEDGGAIDHIELFADDPHADSRNFVLCPGKAYDRSPCGTGTSAKLACLAADGKLLPGQPWRQASVIGSQFEGRYEWLDGQPGGPIVPTIRGRAHVSAEATLLLADDDPFAWGIRR</sequence>
<feature type="chain" id="PRO_0000354035" description="4-hydroxyproline 2-epimerase">
    <location>
        <begin position="1"/>
        <end position="314"/>
    </location>
</feature>
<feature type="active site" description="Proton acceptor" evidence="2">
    <location>
        <position position="88"/>
    </location>
</feature>
<feature type="active site" description="Proton donor" evidence="2">
    <location>
        <position position="236"/>
    </location>
</feature>
<feature type="binding site" evidence="2">
    <location>
        <begin position="89"/>
        <end position="90"/>
    </location>
    <ligand>
        <name>substrate</name>
    </ligand>
</feature>
<feature type="binding site" evidence="2">
    <location>
        <position position="208"/>
    </location>
    <ligand>
        <name>substrate</name>
    </ligand>
</feature>
<feature type="binding site" evidence="2">
    <location>
        <position position="232"/>
    </location>
    <ligand>
        <name>substrate</name>
    </ligand>
</feature>
<feature type="binding site" evidence="2">
    <location>
        <begin position="237"/>
        <end position="238"/>
    </location>
    <ligand>
        <name>substrate</name>
    </ligand>
</feature>
<feature type="mutagenesis site" description="Loss of catalytic activity." evidence="3">
    <original>V</original>
    <variation>G</variation>
    <variation>F</variation>
    <location>
        <position position="60"/>
    </location>
</feature>
<feature type="mutagenesis site" description="Loss of catalytic activity." evidence="3">
    <original>C</original>
    <variation>S</variation>
    <location>
        <position position="88"/>
    </location>
</feature>
<feature type="mutagenesis site" description="Loss of catalytic activity." evidence="3">
    <original>C</original>
    <variation>S</variation>
    <location>
        <position position="236"/>
    </location>
</feature>
<feature type="sequence conflict" description="In Ref. 1; ABS82393." evidence="8" ref="1">
    <original>L</original>
    <variation>I</variation>
    <location>
        <position position="174"/>
    </location>
</feature>
<feature type="sequence conflict" description="In Ref. 1; ABS82393." evidence="8" ref="1">
    <original>D</original>
    <variation>E</variation>
    <location>
        <position position="194"/>
    </location>
</feature>
<feature type="sequence conflict" description="In Ref. 1; ABS82393." evidence="8" ref="1">
    <original>D</original>
    <variation>G</variation>
    <location>
        <position position="197"/>
    </location>
</feature>
<feature type="strand" evidence="9">
    <location>
        <begin position="2"/>
        <end position="11"/>
    </location>
</feature>
<feature type="strand" evidence="9">
    <location>
        <begin position="14"/>
        <end position="21"/>
    </location>
</feature>
<feature type="helix" evidence="9">
    <location>
        <begin position="31"/>
        <end position="41"/>
    </location>
</feature>
<feature type="helix" evidence="9">
    <location>
        <begin position="43"/>
        <end position="50"/>
    </location>
</feature>
<feature type="turn" evidence="9">
    <location>
        <begin position="52"/>
        <end position="54"/>
    </location>
</feature>
<feature type="strand" evidence="9">
    <location>
        <begin position="60"/>
        <end position="65"/>
    </location>
</feature>
<feature type="strand" evidence="9">
    <location>
        <begin position="72"/>
        <end position="79"/>
    </location>
</feature>
<feature type="strand" evidence="9">
    <location>
        <begin position="81"/>
        <end position="84"/>
    </location>
</feature>
<feature type="helix" evidence="9">
    <location>
        <begin position="89"/>
        <end position="101"/>
    </location>
</feature>
<feature type="strand" evidence="9">
    <location>
        <begin position="107"/>
        <end position="113"/>
    </location>
</feature>
<feature type="strand" evidence="9">
    <location>
        <begin position="119"/>
        <end position="123"/>
    </location>
</feature>
<feature type="strand" evidence="9">
    <location>
        <begin position="129"/>
        <end position="132"/>
    </location>
</feature>
<feature type="strand" evidence="9">
    <location>
        <begin position="136"/>
        <end position="147"/>
    </location>
</feature>
<feature type="turn" evidence="9">
    <location>
        <begin position="148"/>
        <end position="150"/>
    </location>
</feature>
<feature type="strand" evidence="9">
    <location>
        <begin position="151"/>
        <end position="169"/>
    </location>
</feature>
<feature type="helix" evidence="9">
    <location>
        <begin position="179"/>
        <end position="195"/>
    </location>
</feature>
<feature type="strand" evidence="9">
    <location>
        <begin position="208"/>
        <end position="215"/>
    </location>
</feature>
<feature type="strand" evidence="9">
    <location>
        <begin position="218"/>
        <end position="225"/>
    </location>
</feature>
<feature type="helix" evidence="9">
    <location>
        <begin position="237"/>
        <end position="249"/>
    </location>
</feature>
<feature type="strand" evidence="9">
    <location>
        <begin position="259"/>
        <end position="262"/>
    </location>
</feature>
<feature type="strand" evidence="9">
    <location>
        <begin position="268"/>
        <end position="275"/>
    </location>
</feature>
<feature type="helix" evidence="9">
    <location>
        <begin position="276"/>
        <end position="278"/>
    </location>
</feature>
<feature type="strand" evidence="9">
    <location>
        <begin position="284"/>
        <end position="290"/>
    </location>
</feature>
<feature type="strand" evidence="9">
    <location>
        <begin position="292"/>
        <end position="302"/>
    </location>
</feature>
<feature type="turn" evidence="9">
    <location>
        <begin position="307"/>
        <end position="310"/>
    </location>
</feature>
<accession>Q9I476</accession>
<accession>A8DEX0</accession>
<gene>
    <name type="ordered locus">PA1268</name>
</gene>
<dbReference type="EC" id="5.1.1.8" evidence="3 4 5"/>
<dbReference type="EMBL" id="EF495341">
    <property type="protein sequence ID" value="ABS82393.2"/>
    <property type="molecule type" value="Genomic_DNA"/>
</dbReference>
<dbReference type="EMBL" id="AE004091">
    <property type="protein sequence ID" value="AAG04657.1"/>
    <property type="molecule type" value="Genomic_DNA"/>
</dbReference>
<dbReference type="PIR" id="G83487">
    <property type="entry name" value="G83487"/>
</dbReference>
<dbReference type="RefSeq" id="NP_249959.1">
    <property type="nucleotide sequence ID" value="NC_002516.2"/>
</dbReference>
<dbReference type="RefSeq" id="WP_003114954.1">
    <property type="nucleotide sequence ID" value="NZ_QZGE01000005.1"/>
</dbReference>
<dbReference type="PDB" id="2AZP">
    <property type="method" value="X-ray"/>
    <property type="resolution" value="2.13 A"/>
    <property type="chains" value="A=1-314"/>
</dbReference>
<dbReference type="PDBsum" id="2AZP"/>
<dbReference type="SMR" id="Q9I476"/>
<dbReference type="STRING" id="208964.PA1268"/>
<dbReference type="PaxDb" id="208964-PA1268"/>
<dbReference type="GeneID" id="881376"/>
<dbReference type="KEGG" id="pae:PA1268"/>
<dbReference type="PATRIC" id="fig|208964.12.peg.1318"/>
<dbReference type="PseudoCAP" id="PA1268"/>
<dbReference type="HOGENOM" id="CLU_036729_1_0_6"/>
<dbReference type="InParanoid" id="Q9I476"/>
<dbReference type="OrthoDB" id="181267at2"/>
<dbReference type="PhylomeDB" id="Q9I476"/>
<dbReference type="BioCyc" id="MetaCyc:MONOMER-15828"/>
<dbReference type="BioCyc" id="PAER208964:G1FZ6-1293-MONOMER"/>
<dbReference type="BRENDA" id="5.1.1.8">
    <property type="organism ID" value="5087"/>
</dbReference>
<dbReference type="EvolutionaryTrace" id="Q9I476"/>
<dbReference type="Proteomes" id="UP000002438">
    <property type="component" value="Chromosome"/>
</dbReference>
<dbReference type="GO" id="GO:0047580">
    <property type="term" value="F:4-hydroxyproline epimerase activity"/>
    <property type="evidence" value="ECO:0000315"/>
    <property type="project" value="PseudoCAP"/>
</dbReference>
<dbReference type="FunFam" id="3.10.310.10:FF:000012">
    <property type="entry name" value="4-hydroxyproline 2-epimerase"/>
    <property type="match status" value="1"/>
</dbReference>
<dbReference type="Gene3D" id="3.10.310.10">
    <property type="entry name" value="Diaminopimelate Epimerase, Chain A, domain 1"/>
    <property type="match status" value="2"/>
</dbReference>
<dbReference type="InterPro" id="IPR008794">
    <property type="entry name" value="Pro_racemase_fam"/>
</dbReference>
<dbReference type="NCBIfam" id="NF010577">
    <property type="entry name" value="PRK13970.1"/>
    <property type="match status" value="1"/>
</dbReference>
<dbReference type="PANTHER" id="PTHR33442">
    <property type="entry name" value="TRANS-3-HYDROXY-L-PROLINE DEHYDRATASE"/>
    <property type="match status" value="1"/>
</dbReference>
<dbReference type="PANTHER" id="PTHR33442:SF1">
    <property type="entry name" value="TRANS-3-HYDROXY-L-PROLINE DEHYDRATASE"/>
    <property type="match status" value="1"/>
</dbReference>
<dbReference type="Pfam" id="PF05544">
    <property type="entry name" value="Pro_racemase"/>
    <property type="match status" value="1"/>
</dbReference>
<dbReference type="PIRSF" id="PIRSF029792">
    <property type="entry name" value="Pro_racemase"/>
    <property type="match status" value="1"/>
</dbReference>
<dbReference type="SFLD" id="SFLDS00028">
    <property type="entry name" value="Proline_Racemase"/>
    <property type="match status" value="1"/>
</dbReference>
<dbReference type="SUPFAM" id="SSF54506">
    <property type="entry name" value="Diaminopimelate epimerase-like"/>
    <property type="match status" value="1"/>
</dbReference>
<name>4HYPE_PSEAE</name>